<comment type="subunit">
    <text evidence="1">Part of the 30S ribosomal subunit.</text>
</comment>
<comment type="similarity">
    <text evidence="1">Belongs to the universal ribosomal protein uS15 family.</text>
</comment>
<sequence length="151" mass="17217">MARLHSGKRGSSGSTRPLRTEVPAWANITAEETEEVIVKMAKEGKQSAMIGLILRDSYGIPDVKLVTGKSVAQIMKDNNVYPEIPEDLFNLMKKAINLRNHLEENTKDIHSKRGLQLTESKIRRLVKYYRNTKVLPAKWRYSPETARLLVE</sequence>
<keyword id="KW-0687">Ribonucleoprotein</keyword>
<keyword id="KW-0689">Ribosomal protein</keyword>
<dbReference type="EMBL" id="CP000743">
    <property type="protein sequence ID" value="ABR56191.1"/>
    <property type="molecule type" value="Genomic_DNA"/>
</dbReference>
<dbReference type="RefSeq" id="WP_011973323.1">
    <property type="nucleotide sequence ID" value="NC_009635.1"/>
</dbReference>
<dbReference type="SMR" id="A6UUL9"/>
<dbReference type="STRING" id="419665.Maeo_0606"/>
<dbReference type="GeneID" id="5327657"/>
<dbReference type="KEGG" id="mae:Maeo_0606"/>
<dbReference type="eggNOG" id="arCOG04185">
    <property type="taxonomic scope" value="Archaea"/>
</dbReference>
<dbReference type="HOGENOM" id="CLU_090139_2_0_2"/>
<dbReference type="OrthoDB" id="6533at2157"/>
<dbReference type="Proteomes" id="UP000001106">
    <property type="component" value="Chromosome"/>
</dbReference>
<dbReference type="GO" id="GO:0022627">
    <property type="term" value="C:cytosolic small ribosomal subunit"/>
    <property type="evidence" value="ECO:0007669"/>
    <property type="project" value="TreeGrafter"/>
</dbReference>
<dbReference type="GO" id="GO:0070181">
    <property type="term" value="F:small ribosomal subunit rRNA binding"/>
    <property type="evidence" value="ECO:0007669"/>
    <property type="project" value="TreeGrafter"/>
</dbReference>
<dbReference type="GO" id="GO:0003735">
    <property type="term" value="F:structural constituent of ribosome"/>
    <property type="evidence" value="ECO:0007669"/>
    <property type="project" value="InterPro"/>
</dbReference>
<dbReference type="GO" id="GO:0006412">
    <property type="term" value="P:translation"/>
    <property type="evidence" value="ECO:0007669"/>
    <property type="project" value="UniProtKB-UniRule"/>
</dbReference>
<dbReference type="CDD" id="cd00353">
    <property type="entry name" value="Ribosomal_S15p_S13e"/>
    <property type="match status" value="1"/>
</dbReference>
<dbReference type="FunFam" id="1.10.287.10:FF:000003">
    <property type="entry name" value="40S ribosomal protein S13"/>
    <property type="match status" value="1"/>
</dbReference>
<dbReference type="Gene3D" id="4.10.860.130">
    <property type="match status" value="1"/>
</dbReference>
<dbReference type="Gene3D" id="1.10.287.10">
    <property type="entry name" value="S15/NS1, RNA-binding"/>
    <property type="match status" value="1"/>
</dbReference>
<dbReference type="HAMAP" id="MF_01343_A">
    <property type="entry name" value="Ribosomal_uS15_A"/>
    <property type="match status" value="1"/>
</dbReference>
<dbReference type="InterPro" id="IPR000589">
    <property type="entry name" value="Ribosomal_uS15"/>
</dbReference>
<dbReference type="InterPro" id="IPR023029">
    <property type="entry name" value="Ribosomal_uS15_arc_euk"/>
</dbReference>
<dbReference type="InterPro" id="IPR012606">
    <property type="entry name" value="Ribosomal_uS15_N"/>
</dbReference>
<dbReference type="InterPro" id="IPR009068">
    <property type="entry name" value="uS15_NS1_RNA-bd_sf"/>
</dbReference>
<dbReference type="NCBIfam" id="NF006331">
    <property type="entry name" value="PRK08561.1"/>
    <property type="match status" value="1"/>
</dbReference>
<dbReference type="PANTHER" id="PTHR11885">
    <property type="entry name" value="RIBOSOMAL PROTEIN S15P/S13E"/>
    <property type="match status" value="1"/>
</dbReference>
<dbReference type="PANTHER" id="PTHR11885:SF6">
    <property type="entry name" value="SMALL RIBOSOMAL SUBUNIT PROTEIN US15"/>
    <property type="match status" value="1"/>
</dbReference>
<dbReference type="Pfam" id="PF08069">
    <property type="entry name" value="Ribosomal_S13_N"/>
    <property type="match status" value="1"/>
</dbReference>
<dbReference type="Pfam" id="PF00312">
    <property type="entry name" value="Ribosomal_S15"/>
    <property type="match status" value="1"/>
</dbReference>
<dbReference type="SMART" id="SM01386">
    <property type="entry name" value="Ribosomal_S13_N"/>
    <property type="match status" value="1"/>
</dbReference>
<dbReference type="SMART" id="SM01387">
    <property type="entry name" value="Ribosomal_S15"/>
    <property type="match status" value="1"/>
</dbReference>
<dbReference type="SUPFAM" id="SSF47060">
    <property type="entry name" value="S15/NS1 RNA-binding domain"/>
    <property type="match status" value="1"/>
</dbReference>
<dbReference type="PROSITE" id="PS00362">
    <property type="entry name" value="RIBOSOMAL_S15"/>
    <property type="match status" value="1"/>
</dbReference>
<proteinExistence type="inferred from homology"/>
<feature type="chain" id="PRO_1000054810" description="Small ribosomal subunit protein uS15">
    <location>
        <begin position="1"/>
        <end position="151"/>
    </location>
</feature>
<feature type="region of interest" description="Disordered" evidence="2">
    <location>
        <begin position="1"/>
        <end position="20"/>
    </location>
</feature>
<protein>
    <recommendedName>
        <fullName evidence="1">Small ribosomal subunit protein uS15</fullName>
    </recommendedName>
    <alternativeName>
        <fullName evidence="3">30S ribosomal protein S15</fullName>
    </alternativeName>
</protein>
<gene>
    <name evidence="1" type="primary">rps15</name>
    <name type="ordered locus">Maeo_0606</name>
</gene>
<evidence type="ECO:0000255" key="1">
    <source>
        <dbReference type="HAMAP-Rule" id="MF_01343"/>
    </source>
</evidence>
<evidence type="ECO:0000256" key="2">
    <source>
        <dbReference type="SAM" id="MobiDB-lite"/>
    </source>
</evidence>
<evidence type="ECO:0000305" key="3"/>
<organism>
    <name type="scientific">Methanococcus aeolicus (strain ATCC BAA-1280 / DSM 17508 / OCM 812 / Nankai-3)</name>
    <dbReference type="NCBI Taxonomy" id="419665"/>
    <lineage>
        <taxon>Archaea</taxon>
        <taxon>Methanobacteriati</taxon>
        <taxon>Methanobacteriota</taxon>
        <taxon>Methanomada group</taxon>
        <taxon>Methanococci</taxon>
        <taxon>Methanococcales</taxon>
        <taxon>Methanococcaceae</taxon>
        <taxon>Methanococcus</taxon>
    </lineage>
</organism>
<reference key="1">
    <citation type="submission" date="2007-06" db="EMBL/GenBank/DDBJ databases">
        <title>Complete sequence of Methanococcus aeolicus Nankai-3.</title>
        <authorList>
            <consortium name="US DOE Joint Genome Institute"/>
            <person name="Copeland A."/>
            <person name="Lucas S."/>
            <person name="Lapidus A."/>
            <person name="Barry K."/>
            <person name="Glavina del Rio T."/>
            <person name="Dalin E."/>
            <person name="Tice H."/>
            <person name="Pitluck S."/>
            <person name="Chain P."/>
            <person name="Malfatti S."/>
            <person name="Shin M."/>
            <person name="Vergez L."/>
            <person name="Schmutz J."/>
            <person name="Larimer F."/>
            <person name="Land M."/>
            <person name="Hauser L."/>
            <person name="Kyrpides N."/>
            <person name="Lykidis A."/>
            <person name="Sieprawska-Lupa M."/>
            <person name="Whitman W.B."/>
            <person name="Richardson P."/>
        </authorList>
    </citation>
    <scope>NUCLEOTIDE SEQUENCE [LARGE SCALE GENOMIC DNA]</scope>
    <source>
        <strain>ATCC BAA-1280 / DSM 17508 / OCM 812 / Nankai-3</strain>
    </source>
</reference>
<name>RS15_META3</name>
<accession>A6UUL9</accession>